<evidence type="ECO:0000305" key="1"/>
<comment type="caution">
    <text evidence="1">Product of a dubious CDS prediction. Found in the 3'-UTR of TLE4. No homolog. Large scale identification of a phosphorylated peptide (PubMed:15302935) would require further confirmation.</text>
</comment>
<dbReference type="EMBL" id="AF068197">
    <property type="protein sequence ID" value="AAC18942.1"/>
    <property type="molecule type" value="mRNA"/>
</dbReference>
<dbReference type="IntAct" id="O60756">
    <property type="interactions" value="1"/>
</dbReference>
<dbReference type="iPTMnet" id="O60756"/>
<dbReference type="BioMuta" id="BCE1"/>
<dbReference type="neXtProt" id="NX_O60756"/>
<dbReference type="PharmGKB" id="PA36542"/>
<dbReference type="InParanoid" id="O60756"/>
<dbReference type="PAN-GO" id="O60756">
    <property type="GO annotations" value="0 GO annotations based on evolutionary models"/>
</dbReference>
<dbReference type="PathwayCommons" id="O60756"/>
<dbReference type="SignaLink" id="O60756"/>
<dbReference type="ChiTaRS" id="TLE4">
    <property type="organism name" value="human"/>
</dbReference>
<dbReference type="Pharos" id="O60756">
    <property type="development level" value="Tdark"/>
</dbReference>
<dbReference type="Proteomes" id="UP000005640">
    <property type="component" value="Unplaced"/>
</dbReference>
<dbReference type="RNAct" id="O60756">
    <property type="molecule type" value="protein"/>
</dbReference>
<protein>
    <recommendedName>
        <fullName>Putative protein BCE-1</fullName>
    </recommendedName>
</protein>
<sequence>MGRTPTAVQVKSFTKQGQQRRVCRDLPLKNTKNGLSPGMRTCFLYLRFFPCLSWMSLKWTQAVHCARNIVLSFMLLLLLLNYNM</sequence>
<feature type="chain" id="PRO_0000064866" description="Putative protein BCE-1">
    <location>
        <begin position="1"/>
        <end position="84"/>
    </location>
</feature>
<gene>
    <name type="primary">BCE1</name>
</gene>
<reference key="1">
    <citation type="submission" date="1998-05" db="EMBL/GenBank/DDBJ databases">
        <authorList>
            <person name="Wang Z."/>
            <person name="Huang G.S."/>
        </authorList>
    </citation>
    <scope>NUCLEOTIDE SEQUENCE [MRNA]</scope>
    <source>
        <tissue>Lymphocyte</tissue>
    </source>
</reference>
<organism>
    <name type="scientific">Homo sapiens</name>
    <name type="common">Human</name>
    <dbReference type="NCBI Taxonomy" id="9606"/>
    <lineage>
        <taxon>Eukaryota</taxon>
        <taxon>Metazoa</taxon>
        <taxon>Chordata</taxon>
        <taxon>Craniata</taxon>
        <taxon>Vertebrata</taxon>
        <taxon>Euteleostomi</taxon>
        <taxon>Mammalia</taxon>
        <taxon>Eutheria</taxon>
        <taxon>Euarchontoglires</taxon>
        <taxon>Primates</taxon>
        <taxon>Haplorrhini</taxon>
        <taxon>Catarrhini</taxon>
        <taxon>Hominidae</taxon>
        <taxon>Homo</taxon>
    </lineage>
</organism>
<proteinExistence type="uncertain"/>
<name>BCE1_HUMAN</name>
<accession>O60756</accession>
<keyword id="KW-1185">Reference proteome</keyword>